<accession>Q5X6S7</accession>
<protein>
    <recommendedName>
        <fullName evidence="1">Exodeoxyribonuclease 7 large subunit</fullName>
        <ecNumber evidence="1">3.1.11.6</ecNumber>
    </recommendedName>
    <alternativeName>
        <fullName evidence="1">Exodeoxyribonuclease VII large subunit</fullName>
        <shortName evidence="1">Exonuclease VII large subunit</shortName>
    </alternativeName>
</protein>
<dbReference type="EC" id="3.1.11.6" evidence="1"/>
<dbReference type="EMBL" id="CR628336">
    <property type="protein sequence ID" value="CAH12039.1"/>
    <property type="molecule type" value="Genomic_DNA"/>
</dbReference>
<dbReference type="RefSeq" id="WP_010946562.1">
    <property type="nucleotide sequence ID" value="NC_006368.1"/>
</dbReference>
<dbReference type="SMR" id="Q5X6S7"/>
<dbReference type="GeneID" id="57034814"/>
<dbReference type="KEGG" id="lpp:lpp0888"/>
<dbReference type="LegioList" id="lpp0888"/>
<dbReference type="HOGENOM" id="CLU_023625_3_1_6"/>
<dbReference type="GO" id="GO:0005737">
    <property type="term" value="C:cytoplasm"/>
    <property type="evidence" value="ECO:0007669"/>
    <property type="project" value="UniProtKB-SubCell"/>
</dbReference>
<dbReference type="GO" id="GO:0009318">
    <property type="term" value="C:exodeoxyribonuclease VII complex"/>
    <property type="evidence" value="ECO:0007669"/>
    <property type="project" value="InterPro"/>
</dbReference>
<dbReference type="GO" id="GO:0008855">
    <property type="term" value="F:exodeoxyribonuclease VII activity"/>
    <property type="evidence" value="ECO:0007669"/>
    <property type="project" value="UniProtKB-UniRule"/>
</dbReference>
<dbReference type="GO" id="GO:0003676">
    <property type="term" value="F:nucleic acid binding"/>
    <property type="evidence" value="ECO:0007669"/>
    <property type="project" value="InterPro"/>
</dbReference>
<dbReference type="GO" id="GO:0006308">
    <property type="term" value="P:DNA catabolic process"/>
    <property type="evidence" value="ECO:0007669"/>
    <property type="project" value="UniProtKB-UniRule"/>
</dbReference>
<dbReference type="CDD" id="cd04489">
    <property type="entry name" value="ExoVII_LU_OBF"/>
    <property type="match status" value="1"/>
</dbReference>
<dbReference type="Gene3D" id="2.40.50.140">
    <property type="entry name" value="Nucleic acid-binding proteins"/>
    <property type="match status" value="1"/>
</dbReference>
<dbReference type="HAMAP" id="MF_00378">
    <property type="entry name" value="Exonuc_7_L"/>
    <property type="match status" value="1"/>
</dbReference>
<dbReference type="InterPro" id="IPR003753">
    <property type="entry name" value="Exonuc_VII_L"/>
</dbReference>
<dbReference type="InterPro" id="IPR020579">
    <property type="entry name" value="Exonuc_VII_lsu_C"/>
</dbReference>
<dbReference type="InterPro" id="IPR012340">
    <property type="entry name" value="NA-bd_OB-fold"/>
</dbReference>
<dbReference type="InterPro" id="IPR025824">
    <property type="entry name" value="OB-fold_nuc-bd_dom"/>
</dbReference>
<dbReference type="NCBIfam" id="TIGR00237">
    <property type="entry name" value="xseA"/>
    <property type="match status" value="1"/>
</dbReference>
<dbReference type="PANTHER" id="PTHR30008">
    <property type="entry name" value="EXODEOXYRIBONUCLEASE 7 LARGE SUBUNIT"/>
    <property type="match status" value="1"/>
</dbReference>
<dbReference type="PANTHER" id="PTHR30008:SF0">
    <property type="entry name" value="EXODEOXYRIBONUCLEASE 7 LARGE SUBUNIT"/>
    <property type="match status" value="1"/>
</dbReference>
<dbReference type="Pfam" id="PF02601">
    <property type="entry name" value="Exonuc_VII_L"/>
    <property type="match status" value="1"/>
</dbReference>
<dbReference type="Pfam" id="PF13742">
    <property type="entry name" value="tRNA_anti_2"/>
    <property type="match status" value="1"/>
</dbReference>
<organism>
    <name type="scientific">Legionella pneumophila (strain Paris)</name>
    <dbReference type="NCBI Taxonomy" id="297246"/>
    <lineage>
        <taxon>Bacteria</taxon>
        <taxon>Pseudomonadati</taxon>
        <taxon>Pseudomonadota</taxon>
        <taxon>Gammaproteobacteria</taxon>
        <taxon>Legionellales</taxon>
        <taxon>Legionellaceae</taxon>
        <taxon>Legionella</taxon>
    </lineage>
</organism>
<gene>
    <name evidence="1" type="primary">xseA</name>
    <name type="ordered locus">lpp0888</name>
</gene>
<evidence type="ECO:0000255" key="1">
    <source>
        <dbReference type="HAMAP-Rule" id="MF_00378"/>
    </source>
</evidence>
<reference key="1">
    <citation type="journal article" date="2004" name="Nat. Genet.">
        <title>Evidence in the Legionella pneumophila genome for exploitation of host cell functions and high genome plasticity.</title>
        <authorList>
            <person name="Cazalet C."/>
            <person name="Rusniok C."/>
            <person name="Brueggemann H."/>
            <person name="Zidane N."/>
            <person name="Magnier A."/>
            <person name="Ma L."/>
            <person name="Tichit M."/>
            <person name="Jarraud S."/>
            <person name="Bouchier C."/>
            <person name="Vandenesch F."/>
            <person name="Kunst F."/>
            <person name="Etienne J."/>
            <person name="Glaser P."/>
            <person name="Buchrieser C."/>
        </authorList>
    </citation>
    <scope>NUCLEOTIDE SEQUENCE [LARGE SCALE GENOMIC DNA]</scope>
    <source>
        <strain>Paris</strain>
    </source>
</reference>
<keyword id="KW-0963">Cytoplasm</keyword>
<keyword id="KW-0269">Exonuclease</keyword>
<keyword id="KW-0378">Hydrolase</keyword>
<keyword id="KW-0540">Nuclease</keyword>
<feature type="chain" id="PRO_0000273668" description="Exodeoxyribonuclease 7 large subunit">
    <location>
        <begin position="1"/>
        <end position="443"/>
    </location>
</feature>
<sequence length="443" mass="49571">MSSQLPILTVSQLNRQVKGFLENEIGLVHVEGEISNLSKPSSGHYYFTLKDSTAQIRCAFFKNRHSNSLLRNFNDGQQIVATGKLSLYEARGEYQLIVEEIVKAGMGILYQRFEELKIKLASEGLFNPERKKPLPRIPETIGIITSPTGAAIQDILSTLARRFPIARIIIYPSEVQGQTAPQQLVKALKLANAHKRCQVLILARGGGSIEDLWAFNDEYLARQIAISEIPVVSGIGHETDFTIADFVADYRAETPTAAATAVTPNCIELFNILDTAIYRLHDAIIRLVKGLQLKLNHLIDKIASPRQTISTYWQTLDYLERQLISAMTQFINLNINKVNIFSTQLQANNPKTQIERTKTQLRQLIMQLNQEIRIQVNQLKNQLSTNLSTLHAVSPLATLDRGYAIVSKNQRILFAAQQAQIGDTIDVRLAKGSLACEVTQIKD</sequence>
<name>EX7L_LEGPA</name>
<comment type="function">
    <text evidence="1">Bidirectionally degrades single-stranded DNA into large acid-insoluble oligonucleotides, which are then degraded further into small acid-soluble oligonucleotides.</text>
</comment>
<comment type="catalytic activity">
    <reaction evidence="1">
        <text>Exonucleolytic cleavage in either 5'- to 3'- or 3'- to 5'-direction to yield nucleoside 5'-phosphates.</text>
        <dbReference type="EC" id="3.1.11.6"/>
    </reaction>
</comment>
<comment type="subunit">
    <text evidence="1">Heterooligomer composed of large and small subunits.</text>
</comment>
<comment type="subcellular location">
    <subcellularLocation>
        <location evidence="1">Cytoplasm</location>
    </subcellularLocation>
</comment>
<comment type="similarity">
    <text evidence="1">Belongs to the XseA family.</text>
</comment>
<proteinExistence type="inferred from homology"/>